<comment type="function">
    <text evidence="1">An essential GTPase which binds GTP, GDP and possibly (p)ppGpp with moderate affinity, with high nucleotide exchange rates and a fairly low GTP hydrolysis rate. Plays a role in control of the cell cycle, stress response, ribosome biogenesis and in those bacteria that undergo differentiation, in morphogenesis control.</text>
</comment>
<comment type="cofactor">
    <cofactor evidence="1">
        <name>Mg(2+)</name>
        <dbReference type="ChEBI" id="CHEBI:18420"/>
    </cofactor>
</comment>
<comment type="subunit">
    <text evidence="1">Monomer.</text>
</comment>
<comment type="subcellular location">
    <subcellularLocation>
        <location evidence="1">Cytoplasm</location>
    </subcellularLocation>
</comment>
<comment type="similarity">
    <text evidence="1">Belongs to the TRAFAC class OBG-HflX-like GTPase superfamily. OBG GTPase family.</text>
</comment>
<sequence length="329" mass="35017">MQFIDQARITVRGGRGGDGIAAFRREKYVPAGGPSGGDGGCGAPVVLEADSNLQTLLDFKYKRLFAADDGRRGGPNKCTGASGKDLVIKVPCGTEVRHLRTGILLGDLTAPGERLTVAFGGRGGLGNAHYLSNRNRAPEKFTEGREGEEWPLQLELKLLAEVGIIGLPNAGKSTLIAVLSAARPKIADYPFTTLVPNLGVVRRPSGDGTVFADIPGLIEGAAQGSGLGHDFLRHIERTRLLIHLVDAGSEDPVADLNVVQQELEAYGHGLVDRPRLLVINKQELVSEDDLPKLQQELKEASGRPVLCISAAMGTNLDQLLAETWVELGV</sequence>
<evidence type="ECO:0000255" key="1">
    <source>
        <dbReference type="HAMAP-Rule" id="MF_01454"/>
    </source>
</evidence>
<evidence type="ECO:0000255" key="2">
    <source>
        <dbReference type="PROSITE-ProRule" id="PRU01231"/>
    </source>
</evidence>
<organism>
    <name type="scientific">Synechococcus sp. (strain CC9605)</name>
    <dbReference type="NCBI Taxonomy" id="110662"/>
    <lineage>
        <taxon>Bacteria</taxon>
        <taxon>Bacillati</taxon>
        <taxon>Cyanobacteriota</taxon>
        <taxon>Cyanophyceae</taxon>
        <taxon>Synechococcales</taxon>
        <taxon>Synechococcaceae</taxon>
        <taxon>Synechococcus</taxon>
    </lineage>
</organism>
<accession>Q3AM97</accession>
<protein>
    <recommendedName>
        <fullName evidence="1">GTPase Obg</fullName>
        <ecNumber evidence="1">3.6.5.-</ecNumber>
    </recommendedName>
    <alternativeName>
        <fullName evidence="1">GTP-binding protein Obg</fullName>
    </alternativeName>
</protein>
<name>OBG_SYNSC</name>
<reference key="1">
    <citation type="submission" date="2005-07" db="EMBL/GenBank/DDBJ databases">
        <title>Complete sequence of Synechococcus sp. CC9605.</title>
        <authorList>
            <consortium name="US DOE Joint Genome Institute"/>
            <person name="Copeland A."/>
            <person name="Lucas S."/>
            <person name="Lapidus A."/>
            <person name="Barry K."/>
            <person name="Detter J.C."/>
            <person name="Glavina T."/>
            <person name="Hammon N."/>
            <person name="Israni S."/>
            <person name="Pitluck S."/>
            <person name="Schmutz J."/>
            <person name="Martinez M."/>
            <person name="Larimer F."/>
            <person name="Land M."/>
            <person name="Kyrpides N."/>
            <person name="Ivanova N."/>
            <person name="Richardson P."/>
        </authorList>
    </citation>
    <scope>NUCLEOTIDE SEQUENCE [LARGE SCALE GENOMIC DNA]</scope>
    <source>
        <strain>CC9605</strain>
    </source>
</reference>
<proteinExistence type="inferred from homology"/>
<gene>
    <name evidence="1" type="primary">obg</name>
    <name type="ordered locus">Syncc9605_0511</name>
</gene>
<keyword id="KW-0067">ATP-binding</keyword>
<keyword id="KW-0963">Cytoplasm</keyword>
<keyword id="KW-0342">GTP-binding</keyword>
<keyword id="KW-0378">Hydrolase</keyword>
<keyword id="KW-0460">Magnesium</keyword>
<keyword id="KW-0479">Metal-binding</keyword>
<keyword id="KW-0547">Nucleotide-binding</keyword>
<feature type="chain" id="PRO_0000386335" description="GTPase Obg">
    <location>
        <begin position="1"/>
        <end position="329"/>
    </location>
</feature>
<feature type="domain" description="Obg" evidence="2">
    <location>
        <begin position="1"/>
        <end position="159"/>
    </location>
</feature>
<feature type="domain" description="OBG-type G" evidence="1">
    <location>
        <begin position="160"/>
        <end position="328"/>
    </location>
</feature>
<feature type="binding site" evidence="1">
    <location>
        <begin position="166"/>
        <end position="173"/>
    </location>
    <ligand>
        <name>ATP</name>
        <dbReference type="ChEBI" id="CHEBI:30616"/>
    </ligand>
</feature>
<feature type="binding site" evidence="1">
    <location>
        <position position="173"/>
    </location>
    <ligand>
        <name>Mg(2+)</name>
        <dbReference type="ChEBI" id="CHEBI:18420"/>
    </ligand>
</feature>
<feature type="binding site" evidence="1">
    <location>
        <begin position="191"/>
        <end position="195"/>
    </location>
    <ligand>
        <name>ATP</name>
        <dbReference type="ChEBI" id="CHEBI:30616"/>
    </ligand>
</feature>
<feature type="binding site" evidence="1">
    <location>
        <position position="193"/>
    </location>
    <ligand>
        <name>Mg(2+)</name>
        <dbReference type="ChEBI" id="CHEBI:18420"/>
    </ligand>
</feature>
<feature type="binding site" evidence="1">
    <location>
        <begin position="213"/>
        <end position="216"/>
    </location>
    <ligand>
        <name>ATP</name>
        <dbReference type="ChEBI" id="CHEBI:30616"/>
    </ligand>
</feature>
<feature type="binding site" evidence="1">
    <location>
        <begin position="280"/>
        <end position="283"/>
    </location>
    <ligand>
        <name>ATP</name>
        <dbReference type="ChEBI" id="CHEBI:30616"/>
    </ligand>
</feature>
<feature type="binding site" evidence="1">
    <location>
        <begin position="309"/>
        <end position="311"/>
    </location>
    <ligand>
        <name>ATP</name>
        <dbReference type="ChEBI" id="CHEBI:30616"/>
    </ligand>
</feature>
<dbReference type="EC" id="3.6.5.-" evidence="1"/>
<dbReference type="EMBL" id="CP000110">
    <property type="protein sequence ID" value="ABB34285.1"/>
    <property type="molecule type" value="Genomic_DNA"/>
</dbReference>
<dbReference type="RefSeq" id="WP_011363517.1">
    <property type="nucleotide sequence ID" value="NC_007516.1"/>
</dbReference>
<dbReference type="SMR" id="Q3AM97"/>
<dbReference type="STRING" id="110662.Syncc9605_0511"/>
<dbReference type="KEGG" id="syd:Syncc9605_0511"/>
<dbReference type="eggNOG" id="COG0536">
    <property type="taxonomic scope" value="Bacteria"/>
</dbReference>
<dbReference type="HOGENOM" id="CLU_011747_2_3_3"/>
<dbReference type="OrthoDB" id="9807318at2"/>
<dbReference type="GO" id="GO:0005737">
    <property type="term" value="C:cytoplasm"/>
    <property type="evidence" value="ECO:0007669"/>
    <property type="project" value="UniProtKB-SubCell"/>
</dbReference>
<dbReference type="GO" id="GO:0005524">
    <property type="term" value="F:ATP binding"/>
    <property type="evidence" value="ECO:0007669"/>
    <property type="project" value="UniProtKB-KW"/>
</dbReference>
<dbReference type="GO" id="GO:0005525">
    <property type="term" value="F:GTP binding"/>
    <property type="evidence" value="ECO:0007669"/>
    <property type="project" value="UniProtKB-UniRule"/>
</dbReference>
<dbReference type="GO" id="GO:0003924">
    <property type="term" value="F:GTPase activity"/>
    <property type="evidence" value="ECO:0007669"/>
    <property type="project" value="UniProtKB-UniRule"/>
</dbReference>
<dbReference type="GO" id="GO:0000287">
    <property type="term" value="F:magnesium ion binding"/>
    <property type="evidence" value="ECO:0007669"/>
    <property type="project" value="InterPro"/>
</dbReference>
<dbReference type="GO" id="GO:0042254">
    <property type="term" value="P:ribosome biogenesis"/>
    <property type="evidence" value="ECO:0007669"/>
    <property type="project" value="UniProtKB-UniRule"/>
</dbReference>
<dbReference type="CDD" id="cd01898">
    <property type="entry name" value="Obg"/>
    <property type="match status" value="1"/>
</dbReference>
<dbReference type="FunFam" id="2.70.210.12:FF:000001">
    <property type="entry name" value="GTPase Obg"/>
    <property type="match status" value="1"/>
</dbReference>
<dbReference type="Gene3D" id="2.70.210.12">
    <property type="entry name" value="GTP1/OBG domain"/>
    <property type="match status" value="1"/>
</dbReference>
<dbReference type="Gene3D" id="3.40.50.300">
    <property type="entry name" value="P-loop containing nucleotide triphosphate hydrolases"/>
    <property type="match status" value="1"/>
</dbReference>
<dbReference type="HAMAP" id="MF_01454">
    <property type="entry name" value="GTPase_Obg"/>
    <property type="match status" value="1"/>
</dbReference>
<dbReference type="InterPro" id="IPR031167">
    <property type="entry name" value="G_OBG"/>
</dbReference>
<dbReference type="InterPro" id="IPR006073">
    <property type="entry name" value="GTP-bd"/>
</dbReference>
<dbReference type="InterPro" id="IPR014100">
    <property type="entry name" value="GTP-bd_Obg/CgtA"/>
</dbReference>
<dbReference type="InterPro" id="IPR006074">
    <property type="entry name" value="GTP1-OBG_CS"/>
</dbReference>
<dbReference type="InterPro" id="IPR006169">
    <property type="entry name" value="GTP1_OBG_dom"/>
</dbReference>
<dbReference type="InterPro" id="IPR036726">
    <property type="entry name" value="GTP1_OBG_dom_sf"/>
</dbReference>
<dbReference type="InterPro" id="IPR045086">
    <property type="entry name" value="OBG_GTPase"/>
</dbReference>
<dbReference type="InterPro" id="IPR027417">
    <property type="entry name" value="P-loop_NTPase"/>
</dbReference>
<dbReference type="InterPro" id="IPR005225">
    <property type="entry name" value="Small_GTP-bd"/>
</dbReference>
<dbReference type="NCBIfam" id="TIGR02729">
    <property type="entry name" value="Obg_CgtA"/>
    <property type="match status" value="1"/>
</dbReference>
<dbReference type="NCBIfam" id="NF008955">
    <property type="entry name" value="PRK12297.1"/>
    <property type="match status" value="1"/>
</dbReference>
<dbReference type="NCBIfam" id="NF008956">
    <property type="entry name" value="PRK12299.1"/>
    <property type="match status" value="1"/>
</dbReference>
<dbReference type="NCBIfam" id="TIGR00231">
    <property type="entry name" value="small_GTP"/>
    <property type="match status" value="1"/>
</dbReference>
<dbReference type="PANTHER" id="PTHR11702">
    <property type="entry name" value="DEVELOPMENTALLY REGULATED GTP-BINDING PROTEIN-RELATED"/>
    <property type="match status" value="1"/>
</dbReference>
<dbReference type="PANTHER" id="PTHR11702:SF31">
    <property type="entry name" value="MITOCHONDRIAL RIBOSOME-ASSOCIATED GTPASE 2"/>
    <property type="match status" value="1"/>
</dbReference>
<dbReference type="Pfam" id="PF01018">
    <property type="entry name" value="GTP1_OBG"/>
    <property type="match status" value="1"/>
</dbReference>
<dbReference type="Pfam" id="PF01926">
    <property type="entry name" value="MMR_HSR1"/>
    <property type="match status" value="1"/>
</dbReference>
<dbReference type="PIRSF" id="PIRSF002401">
    <property type="entry name" value="GTP_bd_Obg/CgtA"/>
    <property type="match status" value="1"/>
</dbReference>
<dbReference type="PRINTS" id="PR00326">
    <property type="entry name" value="GTP1OBG"/>
</dbReference>
<dbReference type="SUPFAM" id="SSF82051">
    <property type="entry name" value="Obg GTP-binding protein N-terminal domain"/>
    <property type="match status" value="1"/>
</dbReference>
<dbReference type="SUPFAM" id="SSF52540">
    <property type="entry name" value="P-loop containing nucleoside triphosphate hydrolases"/>
    <property type="match status" value="1"/>
</dbReference>
<dbReference type="PROSITE" id="PS51710">
    <property type="entry name" value="G_OBG"/>
    <property type="match status" value="1"/>
</dbReference>
<dbReference type="PROSITE" id="PS00905">
    <property type="entry name" value="GTP1_OBG"/>
    <property type="match status" value="1"/>
</dbReference>
<dbReference type="PROSITE" id="PS51883">
    <property type="entry name" value="OBG"/>
    <property type="match status" value="1"/>
</dbReference>